<accession>Q1X707</accession>
<keyword id="KW-0165">Cleavage on pair of basic residues</keyword>
<keyword id="KW-1015">Disulfide bond</keyword>
<keyword id="KW-0325">Glycoprotein</keyword>
<keyword id="KW-0339">Growth factor</keyword>
<keyword id="KW-0964">Secreted</keyword>
<keyword id="KW-0732">Signal</keyword>
<gene>
    <name type="primary">BDNF</name>
</gene>
<protein>
    <recommendedName>
        <fullName evidence="3">Neurotrophic factor BDNF precursor form</fullName>
        <shortName>proBDNF</shortName>
    </recommendedName>
    <alternativeName>
        <fullName>Brain-derived neurotrophic factor</fullName>
    </alternativeName>
    <component>
        <recommendedName>
            <fullName>Neurotrophic factor BDNF</fullName>
        </recommendedName>
    </component>
</protein>
<feature type="signal peptide" evidence="2">
    <location>
        <begin position="1" status="less than"/>
        <end position="5"/>
    </location>
</feature>
<feature type="propeptide" id="PRO_0000346664" evidence="1">
    <location>
        <begin position="6"/>
        <end position="114"/>
    </location>
</feature>
<feature type="chain" id="PRO_0000346665" description="Neurotrophic factor BDNF">
    <location>
        <begin position="115"/>
        <end position="223" status="greater than"/>
    </location>
</feature>
<feature type="glycosylation site" description="N-linked (GlcNAc...) asparagine" evidence="2">
    <location>
        <position position="107"/>
    </location>
</feature>
<feature type="disulfide bond" evidence="1">
    <location>
        <begin position="127"/>
        <end position="194"/>
    </location>
</feature>
<feature type="disulfide bond" evidence="1">
    <location>
        <begin position="172"/>
        <end position="223"/>
    </location>
</feature>
<feature type="non-terminal residue">
    <location>
        <position position="1"/>
    </location>
</feature>
<feature type="non-terminal residue">
    <location>
        <position position="223"/>
    </location>
</feature>
<name>BDNF_CANCA</name>
<organism>
    <name type="scientific">Candoia carinata</name>
    <name type="common">Papuan tree boa</name>
    <dbReference type="NCBI Taxonomy" id="51854"/>
    <lineage>
        <taxon>Eukaryota</taxon>
        <taxon>Metazoa</taxon>
        <taxon>Chordata</taxon>
        <taxon>Craniata</taxon>
        <taxon>Vertebrata</taxon>
        <taxon>Euteleostomi</taxon>
        <taxon>Lepidosauria</taxon>
        <taxon>Squamata</taxon>
        <taxon>Bifurcata</taxon>
        <taxon>Unidentata</taxon>
        <taxon>Episquamata</taxon>
        <taxon>Toxicofera</taxon>
        <taxon>Serpentes</taxon>
        <taxon>Henophidia</taxon>
        <taxon>Boidae</taxon>
        <taxon>Boinae</taxon>
        <taxon>Candoia</taxon>
    </lineage>
</organism>
<sequence length="223" mass="25074">SCMKAAPMKEVSIRGQGSLAYPGLRTQGNLETLSGPNDATRGLTSLADTFEHVIEELLDEQQVIQPSKENKDADLYSTRVMLSSQVPLEPPLLFLLEEYKNYLDAANMSMRVRRHSDPARRGELSVCDSTSEWVTAAEKKTAVDMSGATVTVLEKVPVPKGQLKQYFYETKCSSKGYAKEGCRGIDKRYWNSQCRTTQSFVRALTMDNKKRVGWRFIRIDTSC</sequence>
<comment type="function">
    <text evidence="1">Promotes the survival of neuronal populations that are all located either in the central nervous system or directly connected to it.</text>
</comment>
<comment type="subcellular location">
    <subcellularLocation>
        <location evidence="1">Secreted</location>
    </subcellularLocation>
</comment>
<comment type="similarity">
    <text evidence="3">Belongs to the NGF-beta family.</text>
</comment>
<proteinExistence type="inferred from homology"/>
<evidence type="ECO:0000250" key="1"/>
<evidence type="ECO:0000255" key="2"/>
<evidence type="ECO:0000305" key="3"/>
<dbReference type="EMBL" id="AY988031">
    <property type="protein sequence ID" value="AAY44238.1"/>
    <property type="molecule type" value="Genomic_DNA"/>
</dbReference>
<dbReference type="SMR" id="Q1X707"/>
<dbReference type="GlyCosmos" id="Q1X707">
    <property type="glycosylation" value="1 site, No reported glycans"/>
</dbReference>
<dbReference type="GO" id="GO:0030424">
    <property type="term" value="C:axon"/>
    <property type="evidence" value="ECO:0007669"/>
    <property type="project" value="TreeGrafter"/>
</dbReference>
<dbReference type="GO" id="GO:0030425">
    <property type="term" value="C:dendrite"/>
    <property type="evidence" value="ECO:0007669"/>
    <property type="project" value="TreeGrafter"/>
</dbReference>
<dbReference type="GO" id="GO:0005615">
    <property type="term" value="C:extracellular space"/>
    <property type="evidence" value="ECO:0007669"/>
    <property type="project" value="TreeGrafter"/>
</dbReference>
<dbReference type="GO" id="GO:0008021">
    <property type="term" value="C:synaptic vesicle"/>
    <property type="evidence" value="ECO:0007669"/>
    <property type="project" value="TreeGrafter"/>
</dbReference>
<dbReference type="GO" id="GO:0008083">
    <property type="term" value="F:growth factor activity"/>
    <property type="evidence" value="ECO:0007669"/>
    <property type="project" value="UniProtKB-KW"/>
</dbReference>
<dbReference type="GO" id="GO:0005163">
    <property type="term" value="F:nerve growth factor receptor binding"/>
    <property type="evidence" value="ECO:0007669"/>
    <property type="project" value="TreeGrafter"/>
</dbReference>
<dbReference type="GO" id="GO:0007169">
    <property type="term" value="P:cell surface receptor protein tyrosine kinase signaling pathway"/>
    <property type="evidence" value="ECO:0007669"/>
    <property type="project" value="TreeGrafter"/>
</dbReference>
<dbReference type="GO" id="GO:0050804">
    <property type="term" value="P:modulation of chemical synaptic transmission"/>
    <property type="evidence" value="ECO:0007669"/>
    <property type="project" value="TreeGrafter"/>
</dbReference>
<dbReference type="GO" id="GO:0043524">
    <property type="term" value="P:negative regulation of neuron apoptotic process"/>
    <property type="evidence" value="ECO:0007669"/>
    <property type="project" value="TreeGrafter"/>
</dbReference>
<dbReference type="GO" id="GO:0021675">
    <property type="term" value="P:nerve development"/>
    <property type="evidence" value="ECO:0007669"/>
    <property type="project" value="TreeGrafter"/>
</dbReference>
<dbReference type="GO" id="GO:0038180">
    <property type="term" value="P:nerve growth factor signaling pathway"/>
    <property type="evidence" value="ECO:0007669"/>
    <property type="project" value="TreeGrafter"/>
</dbReference>
<dbReference type="GO" id="GO:0048812">
    <property type="term" value="P:neuron projection morphogenesis"/>
    <property type="evidence" value="ECO:0007669"/>
    <property type="project" value="TreeGrafter"/>
</dbReference>
<dbReference type="FunFam" id="2.10.90.10:FF:000002">
    <property type="entry name" value="Brain-derived neurotrophic factor"/>
    <property type="match status" value="1"/>
</dbReference>
<dbReference type="Gene3D" id="2.10.90.10">
    <property type="entry name" value="Cystine-knot cytokines"/>
    <property type="match status" value="1"/>
</dbReference>
<dbReference type="InterPro" id="IPR020430">
    <property type="entry name" value="Brain-der_neurotrophic_factor"/>
</dbReference>
<dbReference type="InterPro" id="IPR029034">
    <property type="entry name" value="Cystine-knot_cytokine"/>
</dbReference>
<dbReference type="InterPro" id="IPR020408">
    <property type="entry name" value="Nerve_growth_factor-like"/>
</dbReference>
<dbReference type="InterPro" id="IPR002072">
    <property type="entry name" value="Nerve_growth_factor-rel"/>
</dbReference>
<dbReference type="InterPro" id="IPR019846">
    <property type="entry name" value="Nerve_growth_factor_CS"/>
</dbReference>
<dbReference type="PANTHER" id="PTHR11589:SF3">
    <property type="entry name" value="BRAIN-DERIVED NEUROTROPHIC FACTOR"/>
    <property type="match status" value="1"/>
</dbReference>
<dbReference type="PANTHER" id="PTHR11589">
    <property type="entry name" value="NERVE GROWTH FACTOR NGF -RELATED"/>
    <property type="match status" value="1"/>
</dbReference>
<dbReference type="Pfam" id="PF00243">
    <property type="entry name" value="NGF"/>
    <property type="match status" value="1"/>
</dbReference>
<dbReference type="PIRSF" id="PIRSF001789">
    <property type="entry name" value="NGF"/>
    <property type="match status" value="1"/>
</dbReference>
<dbReference type="PRINTS" id="PR01912">
    <property type="entry name" value="BDNFACTOR"/>
</dbReference>
<dbReference type="PRINTS" id="PR00268">
    <property type="entry name" value="NGF"/>
</dbReference>
<dbReference type="SMART" id="SM00140">
    <property type="entry name" value="NGF"/>
    <property type="match status" value="1"/>
</dbReference>
<dbReference type="SUPFAM" id="SSF57501">
    <property type="entry name" value="Cystine-knot cytokines"/>
    <property type="match status" value="1"/>
</dbReference>
<dbReference type="PROSITE" id="PS00248">
    <property type="entry name" value="NGF_1"/>
    <property type="match status" value="1"/>
</dbReference>
<dbReference type="PROSITE" id="PS50270">
    <property type="entry name" value="NGF_2"/>
    <property type="match status" value="1"/>
</dbReference>
<reference key="1">
    <citation type="journal article" date="2006" name="Mol. Phylogenet. Evol.">
        <title>Dispersal and vicariance: the complex evolutionary history of boid snakes.</title>
        <authorList>
            <person name="Noonan B.P."/>
            <person name="Chippindale P.T."/>
        </authorList>
    </citation>
    <scope>NUCLEOTIDE SEQUENCE [GENOMIC DNA]</scope>
</reference>